<gene>
    <name evidence="1" type="primary">smrB</name>
    <name type="ordered locus">c2877</name>
</gene>
<organism>
    <name type="scientific">Escherichia coli O6:H1 (strain CFT073 / ATCC 700928 / UPEC)</name>
    <dbReference type="NCBI Taxonomy" id="199310"/>
    <lineage>
        <taxon>Bacteria</taxon>
        <taxon>Pseudomonadati</taxon>
        <taxon>Pseudomonadota</taxon>
        <taxon>Gammaproteobacteria</taxon>
        <taxon>Enterobacterales</taxon>
        <taxon>Enterobacteriaceae</taxon>
        <taxon>Escherichia</taxon>
    </lineage>
</organism>
<protein>
    <recommendedName>
        <fullName evidence="1">Ribosome rescue factor SmrB</fullName>
        <ecNumber evidence="1">3.1.-.-</ecNumber>
    </recommendedName>
</protein>
<proteinExistence type="inferred from homology"/>
<comment type="function">
    <text evidence="1">Acts as a ribosome collision sensor. Detects stalled/collided disomes (pairs of ribosomes where the leading ribosome is stalled and a second ribosome has collided with it) and endonucleolytically cleaves mRNA at the 5' boundary of the stalled ribosome. Stalled/collided disomes form a new interface (primarily via the 30S subunits) that binds SmrB. Cleaved mRNA becomes available for tmRNA ligation, leading to ribosomal subunit dissociation and rescue of stalled ribosomes.</text>
</comment>
<comment type="subunit">
    <text evidence="1">Associates with collided ribosomes, but not with correctly translating polysomes.</text>
</comment>
<comment type="similarity">
    <text evidence="1">Belongs to the SmrB family.</text>
</comment>
<feature type="chain" id="PRO_0000214552" description="Ribosome rescue factor SmrB">
    <location>
        <begin position="1"/>
        <end position="183"/>
    </location>
</feature>
<feature type="domain" description="Smr" evidence="1">
    <location>
        <begin position="98"/>
        <end position="173"/>
    </location>
</feature>
<accession>P0A8B3</accession>
<accession>P77458</accession>
<dbReference type="EC" id="3.1.-.-" evidence="1"/>
<dbReference type="EMBL" id="AE014075">
    <property type="protein sequence ID" value="AAN81327.1"/>
    <property type="molecule type" value="Genomic_DNA"/>
</dbReference>
<dbReference type="RefSeq" id="WP_000730806.1">
    <property type="nucleotide sequence ID" value="NZ_CP051263.1"/>
</dbReference>
<dbReference type="SMR" id="P0A8B3"/>
<dbReference type="STRING" id="199310.c2877"/>
<dbReference type="GeneID" id="93774844"/>
<dbReference type="KEGG" id="ecc:c2877"/>
<dbReference type="eggNOG" id="COG2840">
    <property type="taxonomic scope" value="Bacteria"/>
</dbReference>
<dbReference type="HOGENOM" id="CLU_055978_4_0_6"/>
<dbReference type="BioCyc" id="ECOL199310:C2877-MONOMER"/>
<dbReference type="Proteomes" id="UP000001410">
    <property type="component" value="Chromosome"/>
</dbReference>
<dbReference type="GO" id="GO:0004521">
    <property type="term" value="F:RNA endonuclease activity"/>
    <property type="evidence" value="ECO:0007669"/>
    <property type="project" value="UniProtKB-UniRule"/>
</dbReference>
<dbReference type="GO" id="GO:0019843">
    <property type="term" value="F:rRNA binding"/>
    <property type="evidence" value="ECO:0007669"/>
    <property type="project" value="UniProtKB-UniRule"/>
</dbReference>
<dbReference type="GO" id="GO:0072344">
    <property type="term" value="P:rescue of stalled ribosome"/>
    <property type="evidence" value="ECO:0007669"/>
    <property type="project" value="UniProtKB-UniRule"/>
</dbReference>
<dbReference type="Gene3D" id="3.30.1370.110">
    <property type="match status" value="1"/>
</dbReference>
<dbReference type="HAMAP" id="MF_01042">
    <property type="entry name" value="SmrB"/>
    <property type="match status" value="1"/>
</dbReference>
<dbReference type="InterPro" id="IPR002625">
    <property type="entry name" value="Smr_dom"/>
</dbReference>
<dbReference type="InterPro" id="IPR036063">
    <property type="entry name" value="Smr_dom_sf"/>
</dbReference>
<dbReference type="InterPro" id="IPR022990">
    <property type="entry name" value="SmrB-like"/>
</dbReference>
<dbReference type="NCBIfam" id="NF003432">
    <property type="entry name" value="PRK04946.1"/>
    <property type="match status" value="1"/>
</dbReference>
<dbReference type="PANTHER" id="PTHR35562">
    <property type="entry name" value="DNA ENDONUCLEASE SMRA-RELATED"/>
    <property type="match status" value="1"/>
</dbReference>
<dbReference type="PANTHER" id="PTHR35562:SF1">
    <property type="entry name" value="UPF0115 PROTEIN YFCN"/>
    <property type="match status" value="1"/>
</dbReference>
<dbReference type="Pfam" id="PF01713">
    <property type="entry name" value="Smr"/>
    <property type="match status" value="1"/>
</dbReference>
<dbReference type="SMART" id="SM00463">
    <property type="entry name" value="SMR"/>
    <property type="match status" value="1"/>
</dbReference>
<dbReference type="SUPFAM" id="SSF160443">
    <property type="entry name" value="SMR domain-like"/>
    <property type="match status" value="1"/>
</dbReference>
<dbReference type="PROSITE" id="PS50828">
    <property type="entry name" value="SMR"/>
    <property type="match status" value="1"/>
</dbReference>
<evidence type="ECO:0000255" key="1">
    <source>
        <dbReference type="HAMAP-Rule" id="MF_01042"/>
    </source>
</evidence>
<reference key="1">
    <citation type="journal article" date="2002" name="Proc. Natl. Acad. Sci. U.S.A.">
        <title>Extensive mosaic structure revealed by the complete genome sequence of uropathogenic Escherichia coli.</title>
        <authorList>
            <person name="Welch R.A."/>
            <person name="Burland V."/>
            <person name="Plunkett G. III"/>
            <person name="Redford P."/>
            <person name="Roesch P."/>
            <person name="Rasko D."/>
            <person name="Buckles E.L."/>
            <person name="Liou S.-R."/>
            <person name="Boutin A."/>
            <person name="Hackett J."/>
            <person name="Stroud D."/>
            <person name="Mayhew G.F."/>
            <person name="Rose D.J."/>
            <person name="Zhou S."/>
            <person name="Schwartz D.C."/>
            <person name="Perna N.T."/>
            <person name="Mobley H.L.T."/>
            <person name="Donnenberg M.S."/>
            <person name="Blattner F.R."/>
        </authorList>
    </citation>
    <scope>NUCLEOTIDE SEQUENCE [LARGE SCALE GENOMIC DNA]</scope>
    <source>
        <strain>CFT073 / ATCC 700928 / UPEC</strain>
    </source>
</reference>
<name>SMRB_ECOL6</name>
<sequence>MKKKTTLSEEDQALFRQLMAGTRKIKQDTIVHRPQRKKISEVPVKRLIQEQADASHYFSDEFQPLLNTEGPVKYVRPDVSHFEAKKLRRGDYSPELFLDLHGLTQLQAKQELGALIAACRREHVFCACVMHGHGKHILKQQTPLWLAQHPHVMAFHQAPKEYGGDAALLVLIEVEEWLPPELP</sequence>
<keyword id="KW-0255">Endonuclease</keyword>
<keyword id="KW-0378">Hydrolase</keyword>
<keyword id="KW-0540">Nuclease</keyword>
<keyword id="KW-1185">Reference proteome</keyword>
<keyword id="KW-0694">RNA-binding</keyword>
<keyword id="KW-0699">rRNA-binding</keyword>